<keyword id="KW-0112">Calmodulin-binding</keyword>
<keyword id="KW-0963">Cytoplasm</keyword>
<keyword id="KW-0903">Direct protein sequencing</keyword>
<keyword id="KW-0274">FAD</keyword>
<keyword id="KW-0285">Flavoprotein</keyword>
<keyword id="KW-0288">FMN</keyword>
<keyword id="KW-0349">Heme</keyword>
<keyword id="KW-0408">Iron</keyword>
<keyword id="KW-0479">Metal-binding</keyword>
<keyword id="KW-0521">NADP</keyword>
<keyword id="KW-0560">Oxidoreductase</keyword>
<keyword id="KW-0597">Phosphoprotein</keyword>
<keyword id="KW-1185">Reference proteome</keyword>
<keyword id="KW-0832">Ubl conjugation</keyword>
<keyword id="KW-0862">Zinc</keyword>
<proteinExistence type="evidence at protein level"/>
<sequence>MACPWKFLFRVKSYQGDLKEEKDINNNVEKTPGAIPSPTTQDDPKSHKHQNGFPQFLTGTAQNVPESLDKLHVTPSTRPQHVRIKNWGNGEIFHDTLHHKATSDISCKSKLCMGSIMNSKSLTRGPRDKPTPVEELLPQAIEFINQYYGSFKEAKIEEHLARLEAVTKEIETTGTYQLTLDELIFATKMAWRNAPRCIGRIQWSNLQVFDARSCSTASEMFQHICRHILYATNSGNIRSAITVFPQRSDGKHDFRIWNSQLIRYAGYQMPDGTIRGDPATLEFTQLCIDLGWKPRYGRFDVLPLVLQAHGQDPEVFEIPPDLVLEVTMEHPKYEWFQELGLKWYALPAVANMLLEVGGLEFPACPFNGWYMGTEIGVRDFCDTQRYNILEEVGRRMGLETHTLASLWKDRAVTEINAAVLHSFQKQNVTIMDHHTASESFMKHMQNEYRARGGCPADWIWLVPPVSGSITPVFHQEMLNYVLSPFYYYQIEPWKTHIWQDEKLRPRRREIRFTVLVKAVFFASVLMRKVMASRVRATVLFATETGKSEALARDLAALFSYAFNTKVVCMEQYKANTLEEEQLLLVVTSTFGNGDCPSNGQTLKKSLFMMKELGHTFRYAVFGLGSSMYPQFCAFAHDIDQKLSHLGASQLAPTGEGDELSGQEDAFRSWAVQTFRAACETFDVRSKHCIQIPKRYTSNATWEPEQYKLTQSPESLDLNKALSSIHAKNVFTMRLKSLQNLQSEKSSRTTLLVQLTFEGSRGPSYLPGEHLGIFPGNQTALVQGILERVVDCSSPDQTVCLEVLDESGSYWVKDKRLPPCSLRQALTYFLDITTPPTQLQLHKLARFATEETHRQRLEALCQPSEYNDWKFSNNPTFLEVLEEFPSLRVPAAFLLSQLPILKPRYYSISSSQDHTPSEVHLTVAVVTYRTRDGQGPLHHGVCSTWINNLKPEDPVPCFVRSVSGFQLPEDPSQPCILIGPGTGIAPFRSFWQQRLHDSQHRGLKGGRMTLVFGCRHPEEDHLYQEEMQEMVRKGVLFQVHTGYSRLPGKPKVYVQDILQKELADEVFSVLHGEQGHLYVCGDVRMARDVATTLKKLVAAKLNLSEEQVEDYFFQLKSQKRYHEDIFGAVFSYGAKKGNTLEEPKGTRL</sequence>
<name>NOS2_RAT</name>
<accession>Q06518</accession>
<accession>O35765</accession>
<accession>O35766</accession>
<accession>O60591</accession>
<accession>O60604</accession>
<accession>P97774</accession>
<accession>Q63267</accession>
<accession>Q64005</accession>
<accession>Q64558</accession>
<feature type="chain" id="PRO_0000170937" description="Nitric oxide synthase, inducible">
    <location>
        <begin position="1"/>
        <end position="1147"/>
    </location>
</feature>
<feature type="domain" description="Flavodoxin-like" evidence="6">
    <location>
        <begin position="536"/>
        <end position="674"/>
    </location>
</feature>
<feature type="domain" description="FAD-binding FR-type" evidence="7">
    <location>
        <begin position="727"/>
        <end position="967"/>
    </location>
</feature>
<feature type="region of interest" description="Disordered" evidence="8">
    <location>
        <begin position="22"/>
        <end position="51"/>
    </location>
</feature>
<feature type="region of interest" description="Calmodulin-binding" evidence="5">
    <location>
        <begin position="512"/>
        <end position="532"/>
    </location>
</feature>
<feature type="short sequence motif" description="DINNN-motif; mediates interaction with SPSB1, SPSB2 and SPSB4" evidence="5">
    <location>
        <begin position="23"/>
        <end position="27"/>
    </location>
</feature>
<feature type="binding site" evidence="5">
    <location>
        <position position="107"/>
    </location>
    <ligand>
        <name>Zn(2+)</name>
        <dbReference type="ChEBI" id="CHEBI:29105"/>
        <note>ligand shared between homodimeric partners</note>
    </ligand>
</feature>
<feature type="binding site" evidence="5">
    <location>
        <position position="112"/>
    </location>
    <ligand>
        <name>Zn(2+)</name>
        <dbReference type="ChEBI" id="CHEBI:29105"/>
        <note>ligand shared between homodimeric partners</note>
    </ligand>
</feature>
<feature type="binding site" evidence="2">
    <location>
        <position position="115"/>
    </location>
    <ligand>
        <name>(6R)-L-erythro-5,6,7,8-tetrahydrobiopterin</name>
        <dbReference type="ChEBI" id="CHEBI:59560"/>
    </ligand>
</feature>
<feature type="binding site" description="axial binding residue" evidence="2">
    <location>
        <position position="197"/>
    </location>
    <ligand>
        <name>heme b</name>
        <dbReference type="ChEBI" id="CHEBI:60344"/>
    </ligand>
    <ligandPart>
        <name>Fe</name>
        <dbReference type="ChEBI" id="CHEBI:18248"/>
    </ligandPart>
</feature>
<feature type="binding site" evidence="2">
    <location>
        <position position="260"/>
    </location>
    <ligand>
        <name>L-arginine</name>
        <dbReference type="ChEBI" id="CHEBI:32682"/>
    </ligand>
</feature>
<feature type="binding site" evidence="2">
    <location>
        <position position="369"/>
    </location>
    <ligand>
        <name>L-arginine</name>
        <dbReference type="ChEBI" id="CHEBI:32682"/>
    </ligand>
</feature>
<feature type="binding site" evidence="2">
    <location>
        <position position="370"/>
    </location>
    <ligand>
        <name>L-arginine</name>
        <dbReference type="ChEBI" id="CHEBI:32682"/>
    </ligand>
</feature>
<feature type="binding site" evidence="2">
    <location>
        <position position="374"/>
    </location>
    <ligand>
        <name>L-arginine</name>
        <dbReference type="ChEBI" id="CHEBI:32682"/>
    </ligand>
</feature>
<feature type="binding site" evidence="5">
    <location>
        <position position="378"/>
    </location>
    <ligand>
        <name>(6R)-L-erythro-5,6,7,8-tetrahydrobiopterin</name>
        <dbReference type="ChEBI" id="CHEBI:59560"/>
    </ligand>
</feature>
<feature type="binding site" evidence="5">
    <location>
        <position position="459"/>
    </location>
    <ligand>
        <name>(6R)-L-erythro-5,6,7,8-tetrahydrobiopterin</name>
        <dbReference type="ChEBI" id="CHEBI:59560"/>
    </ligand>
</feature>
<feature type="binding site" evidence="2">
    <location>
        <position position="460"/>
    </location>
    <ligand>
        <name>(6R)-L-erythro-5,6,7,8-tetrahydrobiopterin</name>
        <dbReference type="ChEBI" id="CHEBI:59560"/>
    </ligand>
</feature>
<feature type="binding site" evidence="2">
    <location>
        <position position="473"/>
    </location>
    <ligand>
        <name>(6R)-L-erythro-5,6,7,8-tetrahydrobiopterin</name>
        <dbReference type="ChEBI" id="CHEBI:59560"/>
    </ligand>
</feature>
<feature type="binding site" evidence="2">
    <location>
        <position position="488"/>
    </location>
    <ligand>
        <name>heme b</name>
        <dbReference type="ChEBI" id="CHEBI:60344"/>
    </ligand>
</feature>
<feature type="binding site" evidence="5">
    <location>
        <position position="542"/>
    </location>
    <ligand>
        <name>FMN</name>
        <dbReference type="ChEBI" id="CHEBI:58210"/>
    </ligand>
</feature>
<feature type="binding site" evidence="5">
    <location>
        <position position="543"/>
    </location>
    <ligand>
        <name>FMN</name>
        <dbReference type="ChEBI" id="CHEBI:58210"/>
    </ligand>
</feature>
<feature type="binding site" evidence="5">
    <location>
        <position position="544"/>
    </location>
    <ligand>
        <name>FMN</name>
        <dbReference type="ChEBI" id="CHEBI:58210"/>
    </ligand>
</feature>
<feature type="binding site" evidence="5">
    <location>
        <position position="546"/>
    </location>
    <ligand>
        <name>FMN</name>
        <dbReference type="ChEBI" id="CHEBI:58210"/>
    </ligand>
</feature>
<feature type="binding site" evidence="5">
    <location>
        <position position="547"/>
    </location>
    <ligand>
        <name>FMN</name>
        <dbReference type="ChEBI" id="CHEBI:58210"/>
    </ligand>
</feature>
<feature type="binding site" evidence="5">
    <location>
        <position position="588"/>
    </location>
    <ligand>
        <name>FMN</name>
        <dbReference type="ChEBI" id="CHEBI:58210"/>
    </ligand>
</feature>
<feature type="binding site" evidence="5">
    <location>
        <position position="589"/>
    </location>
    <ligand>
        <name>FMN</name>
        <dbReference type="ChEBI" id="CHEBI:58210"/>
    </ligand>
</feature>
<feature type="binding site" evidence="5">
    <location>
        <position position="625"/>
    </location>
    <ligand>
        <name>FMN</name>
        <dbReference type="ChEBI" id="CHEBI:58210"/>
    </ligand>
</feature>
<feature type="binding site" evidence="5">
    <location>
        <position position="632"/>
    </location>
    <ligand>
        <name>FMN</name>
        <dbReference type="ChEBI" id="CHEBI:58210"/>
    </ligand>
</feature>
<feature type="binding site" evidence="5">
    <location>
        <position position="658"/>
    </location>
    <ligand>
        <name>FMN</name>
        <dbReference type="ChEBI" id="CHEBI:58210"/>
    </ligand>
</feature>
<feature type="binding site" evidence="5">
    <location>
        <position position="662"/>
    </location>
    <ligand>
        <name>FMN</name>
        <dbReference type="ChEBI" id="CHEBI:58210"/>
    </ligand>
</feature>
<feature type="binding site" evidence="3">
    <location>
        <position position="747"/>
    </location>
    <ligand>
        <name>NADP(+)</name>
        <dbReference type="ChEBI" id="CHEBI:58349"/>
    </ligand>
</feature>
<feature type="binding site" evidence="3">
    <location>
        <position position="769"/>
    </location>
    <ligand>
        <name>FAD</name>
        <dbReference type="ChEBI" id="CHEBI:57692"/>
    </ligand>
</feature>
<feature type="binding site" evidence="3">
    <location>
        <position position="903"/>
    </location>
    <ligand>
        <name>FAD</name>
        <dbReference type="ChEBI" id="CHEBI:57692"/>
    </ligand>
</feature>
<feature type="binding site" evidence="3">
    <location>
        <position position="905"/>
    </location>
    <ligand>
        <name>FAD</name>
        <dbReference type="ChEBI" id="CHEBI:57692"/>
    </ligand>
</feature>
<feature type="binding site" evidence="3">
    <location>
        <position position="906"/>
    </location>
    <ligand>
        <name>FAD</name>
        <dbReference type="ChEBI" id="CHEBI:57692"/>
    </ligand>
</feature>
<feature type="binding site" evidence="3">
    <location>
        <position position="921"/>
    </location>
    <ligand>
        <name>FAD</name>
        <dbReference type="ChEBI" id="CHEBI:57692"/>
    </ligand>
</feature>
<feature type="binding site" evidence="3">
    <location>
        <position position="923"/>
    </location>
    <ligand>
        <name>FAD</name>
        <dbReference type="ChEBI" id="CHEBI:57692"/>
    </ligand>
</feature>
<feature type="binding site" evidence="3">
    <location>
        <position position="926"/>
    </location>
    <ligand>
        <name>NADP(+)</name>
        <dbReference type="ChEBI" id="CHEBI:58349"/>
    </ligand>
</feature>
<feature type="binding site" evidence="3">
    <location>
        <position position="927"/>
    </location>
    <ligand>
        <name>FAD</name>
        <dbReference type="ChEBI" id="CHEBI:57692"/>
    </ligand>
</feature>
<feature type="binding site" evidence="3">
    <location>
        <position position="940"/>
    </location>
    <ligand>
        <name>FAD</name>
        <dbReference type="ChEBI" id="CHEBI:57692"/>
    </ligand>
</feature>
<feature type="binding site" evidence="3">
    <location>
        <position position="941"/>
    </location>
    <ligand>
        <name>FAD</name>
        <dbReference type="ChEBI" id="CHEBI:57692"/>
    </ligand>
</feature>
<feature type="binding site" evidence="3">
    <location>
        <position position="942"/>
    </location>
    <ligand>
        <name>FAD</name>
        <dbReference type="ChEBI" id="CHEBI:57692"/>
    </ligand>
</feature>
<feature type="binding site" evidence="3">
    <location>
        <position position="981"/>
    </location>
    <ligand>
        <name>NADP(+)</name>
        <dbReference type="ChEBI" id="CHEBI:58349"/>
    </ligand>
</feature>
<feature type="binding site" evidence="3">
    <location>
        <position position="1014"/>
    </location>
    <ligand>
        <name>NADP(+)</name>
        <dbReference type="ChEBI" id="CHEBI:58349"/>
    </ligand>
</feature>
<feature type="binding site" evidence="3">
    <location>
        <position position="1043"/>
    </location>
    <ligand>
        <name>NADP(+)</name>
        <dbReference type="ChEBI" id="CHEBI:58349"/>
    </ligand>
</feature>
<feature type="binding site" evidence="3">
    <location>
        <position position="1044"/>
    </location>
    <ligand>
        <name>NADP(+)</name>
        <dbReference type="ChEBI" id="CHEBI:58349"/>
    </ligand>
</feature>
<feature type="binding site" evidence="3">
    <location>
        <position position="1050"/>
    </location>
    <ligand>
        <name>NADP(+)</name>
        <dbReference type="ChEBI" id="CHEBI:58349"/>
    </ligand>
</feature>
<feature type="binding site" evidence="3">
    <location>
        <position position="1052"/>
    </location>
    <ligand>
        <name>NADP(+)</name>
        <dbReference type="ChEBI" id="CHEBI:58349"/>
    </ligand>
</feature>
<feature type="binding site" evidence="3">
    <location>
        <position position="1054"/>
    </location>
    <ligand>
        <name>NADP(+)</name>
        <dbReference type="ChEBI" id="CHEBI:58349"/>
    </ligand>
</feature>
<feature type="binding site" evidence="3">
    <location>
        <position position="1087"/>
    </location>
    <ligand>
        <name>NADP(+)</name>
        <dbReference type="ChEBI" id="CHEBI:58349"/>
    </ligand>
</feature>
<feature type="modified residue" description="Phosphothreonine" evidence="11">
    <location>
        <position position="564"/>
    </location>
</feature>
<feature type="modified residue" description="Phosphotyrosine" evidence="11">
    <location>
        <position position="572"/>
    </location>
</feature>
<feature type="sequence conflict" description="In Ref. 7; BAA07994." evidence="9" ref="7">
    <original>R</original>
    <variation>K</variation>
    <location>
        <position position="10"/>
    </location>
</feature>
<feature type="sequence conflict" description="In Ref. 1; BAA03138." evidence="9" ref="1">
    <original>H</original>
    <variation>Y</variation>
    <location>
        <position position="72"/>
    </location>
</feature>
<feature type="sequence conflict" description="In Ref. 3; AAC13747." evidence="9" ref="3">
    <original>C</original>
    <variation>R</variation>
    <location>
        <position position="107"/>
    </location>
</feature>
<feature type="sequence conflict" description="In Ref. 8; BAA12035." evidence="9" ref="8">
    <original>D</original>
    <variation>V</variation>
    <location>
        <position position="128"/>
    </location>
</feature>
<feature type="sequence conflict" description="In Ref. 3; AAC13747." evidence="9" ref="3">
    <original>P</original>
    <variation>H</variation>
    <location>
        <position position="130"/>
    </location>
</feature>
<feature type="sequence conflict" description="In Ref. 8; BAA12035." evidence="9" ref="8">
    <original>E</original>
    <variation>G</variation>
    <location>
        <position position="171"/>
    </location>
</feature>
<feature type="sequence conflict" description="In Ref. 8; BAA12035." evidence="9" ref="8">
    <original>P</original>
    <variation>S</variation>
    <location>
        <position position="195"/>
    </location>
</feature>
<feature type="sequence conflict" description="In Ref. 9; AAC83553." evidence="9" ref="9">
    <original>S</original>
    <variation>N</variation>
    <location>
        <position position="248"/>
    </location>
</feature>
<feature type="sequence conflict" description="In Ref. 3 and 5." evidence="9" ref="3 5">
    <original>S</original>
    <variation>T</variation>
    <location>
        <position position="248"/>
    </location>
</feature>
<feature type="sequence conflict" description="In Ref. 3; AAC13747." evidence="9" ref="3">
    <original>Y</original>
    <variation>I</variation>
    <location>
        <position position="264"/>
    </location>
</feature>
<feature type="sequence conflict" description="In Ref. 9; AAC83554." evidence="9" ref="9">
    <original>D</original>
    <variation>A</variation>
    <location>
        <position position="271"/>
    </location>
</feature>
<feature type="sequence conflict" description="In Ref. 3; AAC13747." evidence="9" ref="3">
    <original>D</original>
    <variation>E</variation>
    <location>
        <position position="277"/>
    </location>
</feature>
<feature type="sequence conflict" description="In Ref. 1; BAA03138." evidence="9" ref="1">
    <original>A</original>
    <variation>P</variation>
    <location>
        <position position="348"/>
    </location>
</feature>
<feature type="sequence conflict" description="In Ref. 6; CAA54208." evidence="9" ref="6">
    <original>V</original>
    <variation>A</variation>
    <location>
        <position position="349"/>
    </location>
</feature>
<feature type="sequence conflict" description="In Ref. 2, 7, 8 and 9; AAC83553/AAC83554." evidence="9" ref="2 7 8 9">
    <original>F</original>
    <variation>L</variation>
    <location>
        <position position="380"/>
    </location>
</feature>
<feature type="sequence conflict" description="In Ref. 4; BAA02090." evidence="9" ref="4">
    <original>R</original>
    <variation>S</variation>
    <location>
        <position position="395"/>
    </location>
</feature>
<feature type="sequence conflict" description="In Ref. 9; AAC83553." evidence="9" ref="9">
    <original>E</original>
    <variation>G</variation>
    <location>
        <position position="399"/>
    </location>
</feature>
<feature type="sequence conflict" description="In Ref. 3; AAC13747." evidence="9" ref="3">
    <original>V</original>
    <variation>A</variation>
    <location>
        <position position="412"/>
    </location>
</feature>
<feature type="sequence conflict" description="In Ref. 13." evidence="9" ref="13">
    <original>M</original>
    <variation>I</variation>
    <location>
        <position position="477"/>
    </location>
</feature>
<feature type="sequence conflict" description="In Ref. 11; AAB18620." evidence="9" ref="11">
    <original>T</original>
    <variation>R</variation>
    <location>
        <position position="513"/>
    </location>
</feature>
<feature type="sequence conflict" description="In Ref. 12; AAB31028." evidence="9" ref="12">
    <original>L</original>
    <variation>W</variation>
    <location>
        <position position="515"/>
    </location>
</feature>
<feature type="sequence conflict" description="In Ref. 12; AAB31028." evidence="9" ref="12">
    <original>G</original>
    <variation>R</variation>
    <location>
        <position position="545"/>
    </location>
</feature>
<feature type="sequence conflict" description="In Ref. 11; AAB18620." evidence="9" ref="11">
    <original>A</original>
    <variation>R</variation>
    <location>
        <position position="551"/>
    </location>
</feature>
<feature type="sequence conflict" description="In Ref. 12; AAB31028." evidence="9" ref="12">
    <original>A</original>
    <variation>S</variation>
    <location>
        <position position="556"/>
    </location>
</feature>
<feature type="sequence conflict" description="In Ref. 9; AAC83553/AAC83554." evidence="9" ref="9">
    <original>S</original>
    <variation>T</variation>
    <location>
        <position position="559"/>
    </location>
</feature>
<feature type="sequence conflict" description="In Ref. 12; AAB31028." evidence="9" ref="12">
    <original>T</original>
    <variation>N</variation>
    <location>
        <position position="564"/>
    </location>
</feature>
<feature type="sequence conflict" description="In Ref. 12; AAB31028." evidence="9" ref="12">
    <original>E</original>
    <variation>D</variation>
    <location>
        <position position="570"/>
    </location>
</feature>
<feature type="sequence conflict" description="In Ref. 5 and 10." evidence="9" ref="5 10">
    <original>L</original>
    <variation>P</variation>
    <location>
        <position position="583"/>
    </location>
</feature>
<feature type="sequence conflict" description="In Ref. 12; AAB31028." evidence="9" ref="12">
    <original>G</original>
    <variation>A</variation>
    <location>
        <position position="591"/>
    </location>
</feature>
<feature type="sequence conflict" description="In Ref. 1 and 6." evidence="9" ref="1 6">
    <original>G</original>
    <variation>V</variation>
    <location>
        <position position="591"/>
    </location>
</feature>
<feature type="sequence conflict" description="In Ref. 2; AAA85861." evidence="9" ref="2">
    <original>A</original>
    <variation>R</variation>
    <location>
        <position position="619"/>
    </location>
</feature>
<feature type="sequence conflict" description="In Ref. 9; AAC83553." evidence="9" ref="9">
    <original>Q</original>
    <variation>P</variation>
    <location>
        <position position="640"/>
    </location>
</feature>
<feature type="sequence conflict" description="In Ref. 11; AAB18620." evidence="9" ref="11">
    <original>D</original>
    <variation>G</variation>
    <location>
        <position position="664"/>
    </location>
</feature>
<feature type="sequence conflict" description="In Ref. 1; BAA03138." evidence="9" ref="1">
    <original>ET</original>
    <variation>VP</variation>
    <location>
        <begin position="679"/>
        <end position="680"/>
    </location>
</feature>
<feature type="sequence conflict" description="In Ref. 11; AAB18620." evidence="9" ref="11">
    <original>Q</original>
    <variation>P</variation>
    <location>
        <position position="690"/>
    </location>
</feature>
<feature type="sequence conflict" description="In Ref. 11; AAB18620." evidence="9" ref="11">
    <original>S</original>
    <variation>N</variation>
    <location>
        <position position="711"/>
    </location>
</feature>
<feature type="sequence conflict" description="In Ref. 11; AAB18620." evidence="9" ref="11">
    <original>SL</original>
    <variation>TR</variation>
    <location>
        <begin position="714"/>
        <end position="715"/>
    </location>
</feature>
<feature type="sequence conflict" description="In Ref. 2, 7, 8, 9; AAC83553/AAC83554 and 10; AAC16401." evidence="9" ref="2 7 8 9 10">
    <original>S</original>
    <variation>P</variation>
    <location>
        <position position="714"/>
    </location>
</feature>
<feature type="sequence conflict" description="In Ref. 11; AAB18620." evidence="9" ref="11">
    <original>K</original>
    <variation>R</variation>
    <location>
        <position position="719"/>
    </location>
</feature>
<feature type="sequence conflict" description="In Ref. 6." evidence="9" ref="6">
    <original>L</original>
    <variation>P</variation>
    <location>
        <position position="721"/>
    </location>
</feature>
<feature type="sequence conflict" description="In Ref. 1, 6 and 11." evidence="9" ref="1 6 11">
    <original>S</original>
    <variation>R</variation>
    <location>
        <position position="722"/>
    </location>
</feature>
<feature type="sequence conflict" description="In Ref. 11." evidence="9" ref="11">
    <original>IHA</original>
    <variation>FLN</variation>
    <location>
        <begin position="724"/>
        <end position="726"/>
    </location>
</feature>
<feature type="sequence conflict" description="In Ref. 11; AAB18620." evidence="9" ref="11">
    <original>F</original>
    <variation>I</variation>
    <location>
        <position position="730"/>
    </location>
</feature>
<feature type="sequence conflict" description="In Ref. 9; AAC83553." evidence="9" ref="9">
    <original>T</original>
    <variation>A</variation>
    <location>
        <position position="731"/>
    </location>
</feature>
<feature type="sequence conflict" description="In Ref. 6; CAA54208." evidence="9" ref="6">
    <original>L</original>
    <variation>P</variation>
    <location>
        <position position="740"/>
    </location>
</feature>
<feature type="sequence conflict" description="In Ref. 3; AAC13747." evidence="9" ref="3">
    <original>A</original>
    <variation>G</variation>
    <location>
        <position position="779"/>
    </location>
</feature>
<feature type="sequence conflict" description="In Ref. 8; BAA12035." evidence="9" ref="8">
    <original>P</original>
    <variation>S</variation>
    <location>
        <position position="834"/>
    </location>
</feature>
<feature type="sequence conflict" description="In Ref. 1; BAA03138." evidence="9" ref="1">
    <original>A</original>
    <variation>G</variation>
    <location>
        <position position="844"/>
    </location>
</feature>
<feature type="sequence conflict" description="In Ref. 4; BAA02090." evidence="9" ref="4">
    <original>S</original>
    <variation>L</variation>
    <location>
        <position position="895"/>
    </location>
</feature>
<feature type="sequence conflict" description="In Ref. 3; AAC13747." evidence="9" ref="3">
    <original>Q</original>
    <variation>L</variation>
    <location>
        <position position="911"/>
    </location>
</feature>
<feature type="sequence conflict" description="In Ref. 8; BAA12035." evidence="9" ref="8">
    <original>V</original>
    <variation>D</variation>
    <location>
        <position position="925"/>
    </location>
</feature>
<feature type="sequence conflict" description="In Ref. 9; AAC83554." evidence="9" ref="9">
    <original>H</original>
    <variation>N</variation>
    <location>
        <position position="937"/>
    </location>
</feature>
<feature type="sequence conflict" description="In Ref. 2, 7 and 9; AAC83553/AAC83554." evidence="9" ref="2 7 9">
    <original>H</original>
    <variation>R</variation>
    <location>
        <position position="999"/>
    </location>
</feature>
<feature type="sequence conflict" description="In Ref. 9; AAC83554." evidence="9" ref="9">
    <original>TL</original>
    <variation>NF</variation>
    <location>
        <begin position="1008"/>
        <end position="1009"/>
    </location>
</feature>
<feature type="sequence conflict" description="In Ref. 5." evidence="9" ref="5">
    <original>P</original>
    <variation>R</variation>
    <location>
        <position position="1016"/>
    </location>
</feature>
<feature type="sequence conflict" description="In Ref. 8." evidence="9" ref="8">
    <original>P</original>
    <variation>S</variation>
    <location>
        <position position="1016"/>
    </location>
</feature>
<feature type="sequence conflict" description="In Ref. 5 and 8." evidence="9" ref="5 8">
    <original>E</original>
    <variation>R</variation>
    <location>
        <position position="1017"/>
    </location>
</feature>
<feature type="sequence conflict" description="In Ref. 9; AAC83554." evidence="9" ref="9">
    <original>E</original>
    <variation>K</variation>
    <location>
        <position position="1024"/>
    </location>
</feature>
<feature type="sequence conflict" description="In Ref. 9; AAC83553." evidence="9" ref="9">
    <original>L</original>
    <variation>I</variation>
    <location>
        <position position="1076"/>
    </location>
</feature>
<feature type="sequence conflict" description="In Ref. 6; CAA54208." evidence="9" ref="6">
    <original>M</original>
    <variation>I</variation>
    <location>
        <position position="1084"/>
    </location>
</feature>
<feature type="sequence conflict" description="In Ref. 9; AAC83554." evidence="9" ref="9">
    <original>F</original>
    <variation>V</variation>
    <location>
        <position position="1129"/>
    </location>
</feature>
<feature type="sequence conflict" description="In Ref. 2, 7 and 9; AAC83553/AAC83554." evidence="9" ref="2 7 9">
    <original>A</original>
    <variation>V</variation>
    <location>
        <position position="1133"/>
    </location>
</feature>
<feature type="sequence conflict" description="In Ref. 2, 7 and 9; AAC83553/AAC83554." evidence="9" ref="2 7 9">
    <original>T</original>
    <variation>A</variation>
    <location>
        <position position="1138"/>
    </location>
</feature>
<gene>
    <name type="primary">Nos2</name>
</gene>
<comment type="function">
    <text evidence="4 5">Produces nitric oxide (NO) which is a messenger molecule with diverse functions throughout the body. In macrophages, NO mediates tumoricidal and bactericidal actions. Also has nitrosylase activity and mediates cysteine S-nitrosylation of cytoplasmic target proteins such PTGS2/COX2. As component of the iNOS-S100A8/9 transnitrosylase complex involved in the selective inflammatory stimulus-dependent S-nitrosylation of GAPDH implicated in regulation of the GAIT complex activity and probably multiple targets including ANXA5, EZR, MSN and VIM. Involved in inflammation, enhances the synthesis of pro-inflammatory mediators such as IL6 and IL8.</text>
</comment>
<comment type="catalytic activity">
    <reaction evidence="5">
        <text>2 L-arginine + 3 NADPH + 4 O2 + H(+) = 2 L-citrulline + 2 nitric oxide + 3 NADP(+) + 4 H2O</text>
        <dbReference type="Rhea" id="RHEA:19897"/>
        <dbReference type="ChEBI" id="CHEBI:15377"/>
        <dbReference type="ChEBI" id="CHEBI:15378"/>
        <dbReference type="ChEBI" id="CHEBI:15379"/>
        <dbReference type="ChEBI" id="CHEBI:16480"/>
        <dbReference type="ChEBI" id="CHEBI:32682"/>
        <dbReference type="ChEBI" id="CHEBI:57743"/>
        <dbReference type="ChEBI" id="CHEBI:57783"/>
        <dbReference type="ChEBI" id="CHEBI:58349"/>
        <dbReference type="EC" id="1.14.13.39"/>
    </reaction>
    <physiologicalReaction direction="left-to-right" evidence="5">
        <dbReference type="Rhea" id="RHEA:19898"/>
    </physiologicalReaction>
</comment>
<comment type="cofactor">
    <cofactor evidence="5">
        <name>heme b</name>
        <dbReference type="ChEBI" id="CHEBI:60344"/>
    </cofactor>
</comment>
<comment type="cofactor">
    <cofactor evidence="3">
        <name>FAD</name>
        <dbReference type="ChEBI" id="CHEBI:57692"/>
    </cofactor>
    <text evidence="3">Binds 1 FAD.</text>
</comment>
<comment type="cofactor">
    <cofactor evidence="5">
        <name>FMN</name>
        <dbReference type="ChEBI" id="CHEBI:58210"/>
    </cofactor>
    <text evidence="5">Binds 1 FMN.</text>
</comment>
<comment type="cofactor">
    <cofactor evidence="5">
        <name>(6R)-L-erythro-5,6,7,8-tetrahydrobiopterin</name>
        <dbReference type="ChEBI" id="CHEBI:59560"/>
    </cofactor>
    <text evidence="5">Tetrahydrobiopterin (BH4). May stabilize the dimeric form of the enzyme.</text>
</comment>
<comment type="activity regulation">
    <text evidence="1">Not stimulated by calcium/calmodulin. Aspirin inhibits expression and function of this enzyme and effects may be exerted at the level of translational/post-translational modification and directly on the catalytic activity (By similarity).</text>
</comment>
<comment type="subunit">
    <text evidence="4">Homodimer. Interacts with NHERF1. Interacts with GAPDH; induced by oxidatively-modified low-densitity lipoprotein (LDL(ox)). Interacts with S100A8 and S100A9 to form the iNOS-S100A8/9 transnitrosylase complex. Interacts with SPSB1, SPSB2 and SPSB4. Interacts with ELOC and CUL5 in the presence of SPSB1 or SPSB2 or SPSB4. Forms a complex with ASL, ASS1 and HSP90AA1; the complex regulates cell-autonomous L-arginine synthesis and citrulline recycling while channeling extracellular L-arginine to nitric oxide synthesis pathway.</text>
</comment>
<comment type="interaction">
    <interactant intactId="EBI-15919967">
        <id>Q06518</id>
    </interactant>
    <interactant intactId="EBI-1187180">
        <id>Q7TQN4</id>
        <label>Rela</label>
    </interactant>
    <organismsDiffer>false</organismsDiffer>
    <experiments>3</experiments>
</comment>
<comment type="subcellular location">
    <subcellularLocation>
        <location evidence="5">Cytoplasm</location>
        <location evidence="5">Cytosol</location>
    </subcellularLocation>
    <text evidence="5">Localizes as discrete foci scattered throughout the cytosol and in the presence of SPSB1 and SPSB4, exhibits a more diffuse cytosolic localization.</text>
</comment>
<comment type="tissue specificity">
    <text>In normal kidney, expressed primarily in the medullary thick ascending limb, with minor amounts in the medullary collecting duct and vasa recta bundle.</text>
</comment>
<comment type="induction">
    <text>By interferon gamma and lipopolysaccharides (LPS).</text>
</comment>
<comment type="PTM">
    <text evidence="5">Polyubiquitinated; mediated by SPSB1, SPSB2 and SPSB4, leading to proteasomal degradation.</text>
</comment>
<comment type="similarity">
    <text evidence="9">Belongs to the NOS family.</text>
</comment>
<comment type="caution">
    <text evidence="10">sequence Was originally thought to originate from human but appears to be from rat.</text>
</comment>
<dbReference type="EC" id="1.14.13.39" evidence="5"/>
<dbReference type="EMBL" id="D14051">
    <property type="protein sequence ID" value="BAA03138.1"/>
    <property type="molecule type" value="mRNA"/>
</dbReference>
<dbReference type="EMBL" id="U26686">
    <property type="protein sequence ID" value="AAA85861.1"/>
    <property type="molecule type" value="mRNA"/>
</dbReference>
<dbReference type="EMBL" id="U03699">
    <property type="protein sequence ID" value="AAC13747.1"/>
    <property type="molecule type" value="mRNA"/>
</dbReference>
<dbReference type="EMBL" id="D12520">
    <property type="protein sequence ID" value="BAA02090.1"/>
    <property type="molecule type" value="mRNA"/>
</dbReference>
<dbReference type="EMBL" id="L12562">
    <property type="protein sequence ID" value="AAA41720.1"/>
    <property type="molecule type" value="mRNA"/>
</dbReference>
<dbReference type="EMBL" id="X76881">
    <property type="protein sequence ID" value="CAA54208.1"/>
    <property type="molecule type" value="mRNA"/>
</dbReference>
<dbReference type="EMBL" id="D44591">
    <property type="protein sequence ID" value="BAA07994.1"/>
    <property type="molecule type" value="mRNA"/>
</dbReference>
<dbReference type="EMBL" id="D83661">
    <property type="protein sequence ID" value="BAA12035.1"/>
    <property type="molecule type" value="mRNA"/>
</dbReference>
<dbReference type="EMBL" id="AF049656">
    <property type="protein sequence ID" value="AAC83553.1"/>
    <property type="molecule type" value="mRNA"/>
</dbReference>
<dbReference type="EMBL" id="AF051164">
    <property type="protein sequence ID" value="AAC83554.1"/>
    <property type="molecule type" value="mRNA"/>
</dbReference>
<dbReference type="EMBL" id="AF006619">
    <property type="protein sequence ID" value="AAC16401.1"/>
    <property type="molecule type" value="mRNA"/>
</dbReference>
<dbReference type="EMBL" id="AF006620">
    <property type="protein sequence ID" value="AAC16402.1"/>
    <property type="molecule type" value="mRNA"/>
</dbReference>
<dbReference type="EMBL" id="U48829">
    <property type="protein sequence ID" value="AAB18620.1"/>
    <property type="molecule type" value="mRNA"/>
</dbReference>
<dbReference type="EMBL" id="S71597">
    <property type="protein sequence ID" value="AAB31028.2"/>
    <property type="molecule type" value="mRNA"/>
</dbReference>
<dbReference type="EMBL" id="L36063">
    <property type="protein sequence ID" value="AAC02242.1"/>
    <property type="molecule type" value="mRNA"/>
</dbReference>
<dbReference type="PIR" id="I53165">
    <property type="entry name" value="I53165"/>
</dbReference>
<dbReference type="PIR" id="I56575">
    <property type="entry name" value="I56575"/>
</dbReference>
<dbReference type="PIR" id="JC5027">
    <property type="entry name" value="JC5027"/>
</dbReference>
<dbReference type="PIR" id="S38253">
    <property type="entry name" value="S38253"/>
</dbReference>
<dbReference type="PIR" id="S47647">
    <property type="entry name" value="S47647"/>
</dbReference>
<dbReference type="RefSeq" id="NP_036743.3">
    <property type="nucleotide sequence ID" value="NM_012611.3"/>
</dbReference>
<dbReference type="SMR" id="Q06518"/>
<dbReference type="CORUM" id="Q06518"/>
<dbReference type="DIP" id="DIP-59942N"/>
<dbReference type="FunCoup" id="Q06518">
    <property type="interactions" value="363"/>
</dbReference>
<dbReference type="IntAct" id="Q06518">
    <property type="interactions" value="1"/>
</dbReference>
<dbReference type="STRING" id="10116.ENSRNOP00000067662"/>
<dbReference type="BindingDB" id="Q06518"/>
<dbReference type="ChEMBL" id="CHEMBL3051"/>
<dbReference type="iPTMnet" id="Q06518"/>
<dbReference type="PhosphoSitePlus" id="Q06518"/>
<dbReference type="PaxDb" id="10116-ENSRNOP00000067662"/>
<dbReference type="GeneID" id="24599"/>
<dbReference type="KEGG" id="rno:24599"/>
<dbReference type="AGR" id="RGD:3185"/>
<dbReference type="CTD" id="4843"/>
<dbReference type="RGD" id="3185">
    <property type="gene designation" value="Nos2"/>
</dbReference>
<dbReference type="eggNOG" id="KOG1158">
    <property type="taxonomic scope" value="Eukaryota"/>
</dbReference>
<dbReference type="InParanoid" id="Q06518"/>
<dbReference type="OrthoDB" id="1688044at2759"/>
<dbReference type="PhylomeDB" id="Q06518"/>
<dbReference type="BRENDA" id="1.14.13.39">
    <property type="organism ID" value="5301"/>
</dbReference>
<dbReference type="Reactome" id="R-RNO-1222556">
    <property type="pathway name" value="ROS and RNS production in phagocytes"/>
</dbReference>
<dbReference type="Reactome" id="R-RNO-392154">
    <property type="pathway name" value="Nitric oxide stimulates guanylate cyclase"/>
</dbReference>
<dbReference type="Reactome" id="R-RNO-9033241">
    <property type="pathway name" value="Peroxisomal protein import"/>
</dbReference>
<dbReference type="PRO" id="PR:Q06518"/>
<dbReference type="Proteomes" id="UP000002494">
    <property type="component" value="Unplaced"/>
</dbReference>
<dbReference type="GO" id="GO:0030863">
    <property type="term" value="C:cortical cytoskeleton"/>
    <property type="evidence" value="ECO:0000266"/>
    <property type="project" value="RGD"/>
</dbReference>
<dbReference type="GO" id="GO:0005737">
    <property type="term" value="C:cytoplasm"/>
    <property type="evidence" value="ECO:0000314"/>
    <property type="project" value="UniProtKB"/>
</dbReference>
<dbReference type="GO" id="GO:0005829">
    <property type="term" value="C:cytosol"/>
    <property type="evidence" value="ECO:0000314"/>
    <property type="project" value="UniProtKB"/>
</dbReference>
<dbReference type="GO" id="GO:0005615">
    <property type="term" value="C:extracellular space"/>
    <property type="evidence" value="ECO:0000314"/>
    <property type="project" value="RGD"/>
</dbReference>
<dbReference type="GO" id="GO:0005634">
    <property type="term" value="C:nucleus"/>
    <property type="evidence" value="ECO:0000314"/>
    <property type="project" value="BHF-UCL"/>
</dbReference>
<dbReference type="GO" id="GO:0048471">
    <property type="term" value="C:perinuclear region of cytoplasm"/>
    <property type="evidence" value="ECO:0000314"/>
    <property type="project" value="RGD"/>
</dbReference>
<dbReference type="GO" id="GO:0005777">
    <property type="term" value="C:peroxisome"/>
    <property type="evidence" value="ECO:0000314"/>
    <property type="project" value="UniProtKB"/>
</dbReference>
<dbReference type="GO" id="GO:0005886">
    <property type="term" value="C:plasma membrane"/>
    <property type="evidence" value="ECO:0000318"/>
    <property type="project" value="GO_Central"/>
</dbReference>
<dbReference type="GO" id="GO:0003779">
    <property type="term" value="F:actin binding"/>
    <property type="evidence" value="ECO:0000314"/>
    <property type="project" value="RGD"/>
</dbReference>
<dbReference type="GO" id="GO:0034618">
    <property type="term" value="F:arginine binding"/>
    <property type="evidence" value="ECO:0000266"/>
    <property type="project" value="RGD"/>
</dbReference>
<dbReference type="GO" id="GO:0008013">
    <property type="term" value="F:beta-catenin binding"/>
    <property type="evidence" value="ECO:0000353"/>
    <property type="project" value="RGD"/>
</dbReference>
<dbReference type="GO" id="GO:0045296">
    <property type="term" value="F:cadherin binding"/>
    <property type="evidence" value="ECO:0000353"/>
    <property type="project" value="RGD"/>
</dbReference>
<dbReference type="GO" id="GO:0005516">
    <property type="term" value="F:calmodulin binding"/>
    <property type="evidence" value="ECO:0007669"/>
    <property type="project" value="UniProtKB-KW"/>
</dbReference>
<dbReference type="GO" id="GO:0008603">
    <property type="term" value="F:cAMP-dependent protein kinase regulator activity"/>
    <property type="evidence" value="ECO:0000314"/>
    <property type="project" value="RGD"/>
</dbReference>
<dbReference type="GO" id="GO:0050660">
    <property type="term" value="F:flavin adenine dinucleotide binding"/>
    <property type="evidence" value="ECO:0000266"/>
    <property type="project" value="RGD"/>
</dbReference>
<dbReference type="GO" id="GO:0010181">
    <property type="term" value="F:FMN binding"/>
    <property type="evidence" value="ECO:0000266"/>
    <property type="project" value="RGD"/>
</dbReference>
<dbReference type="GO" id="GO:0020037">
    <property type="term" value="F:heme binding"/>
    <property type="evidence" value="ECO:0000266"/>
    <property type="project" value="RGD"/>
</dbReference>
<dbReference type="GO" id="GO:0051879">
    <property type="term" value="F:Hsp90 protein binding"/>
    <property type="evidence" value="ECO:0000314"/>
    <property type="project" value="RGD"/>
</dbReference>
<dbReference type="GO" id="GO:0042802">
    <property type="term" value="F:identical protein binding"/>
    <property type="evidence" value="ECO:0000353"/>
    <property type="project" value="RGD"/>
</dbReference>
<dbReference type="GO" id="GO:0046872">
    <property type="term" value="F:metal ion binding"/>
    <property type="evidence" value="ECO:0007669"/>
    <property type="project" value="UniProtKB-KW"/>
</dbReference>
<dbReference type="GO" id="GO:0050661">
    <property type="term" value="F:NADP binding"/>
    <property type="evidence" value="ECO:0007669"/>
    <property type="project" value="InterPro"/>
</dbReference>
<dbReference type="GO" id="GO:0004517">
    <property type="term" value="F:nitric-oxide synthase activity"/>
    <property type="evidence" value="ECO:0000314"/>
    <property type="project" value="RGD"/>
</dbReference>
<dbReference type="GO" id="GO:0050998">
    <property type="term" value="F:nitric-oxide synthase binding"/>
    <property type="evidence" value="ECO:0000353"/>
    <property type="project" value="RGD"/>
</dbReference>
<dbReference type="GO" id="GO:0042803">
    <property type="term" value="F:protein homodimerization activity"/>
    <property type="evidence" value="ECO:0000266"/>
    <property type="project" value="RGD"/>
</dbReference>
<dbReference type="GO" id="GO:0019901">
    <property type="term" value="F:protein kinase binding"/>
    <property type="evidence" value="ECO:0000353"/>
    <property type="project" value="RGD"/>
</dbReference>
<dbReference type="GO" id="GO:0034617">
    <property type="term" value="F:tetrahydrobiopterin binding"/>
    <property type="evidence" value="ECO:0000266"/>
    <property type="project" value="RGD"/>
</dbReference>
<dbReference type="GO" id="GO:0006527">
    <property type="term" value="P:arginine catabolic process"/>
    <property type="evidence" value="ECO:0000266"/>
    <property type="project" value="RGD"/>
</dbReference>
<dbReference type="GO" id="GO:0001974">
    <property type="term" value="P:blood vessel remodeling"/>
    <property type="evidence" value="ECO:0000315"/>
    <property type="project" value="RGD"/>
</dbReference>
<dbReference type="GO" id="GO:0071345">
    <property type="term" value="P:cellular response to cytokine stimulus"/>
    <property type="evidence" value="ECO:0000314"/>
    <property type="project" value="MGI"/>
</dbReference>
<dbReference type="GO" id="GO:0071347">
    <property type="term" value="P:cellular response to interleukin-1"/>
    <property type="evidence" value="ECO:0000270"/>
    <property type="project" value="RGD"/>
</dbReference>
<dbReference type="GO" id="GO:0071222">
    <property type="term" value="P:cellular response to lipopolysaccharide"/>
    <property type="evidence" value="ECO:0000270"/>
    <property type="project" value="RGD"/>
</dbReference>
<dbReference type="GO" id="GO:0071285">
    <property type="term" value="P:cellular response to lithium ion"/>
    <property type="evidence" value="ECO:0000270"/>
    <property type="project" value="RGD"/>
</dbReference>
<dbReference type="GO" id="GO:0071461">
    <property type="term" value="P:cellular response to redox state"/>
    <property type="evidence" value="ECO:0000270"/>
    <property type="project" value="RGD"/>
</dbReference>
<dbReference type="GO" id="GO:0071356">
    <property type="term" value="P:cellular response to tumor necrosis factor"/>
    <property type="evidence" value="ECO:0000270"/>
    <property type="project" value="RGD"/>
</dbReference>
<dbReference type="GO" id="GO:0071346">
    <property type="term" value="P:cellular response to type II interferon"/>
    <property type="evidence" value="ECO:0000266"/>
    <property type="project" value="RGD"/>
</dbReference>
<dbReference type="GO" id="GO:0071305">
    <property type="term" value="P:cellular response to vitamin D"/>
    <property type="evidence" value="ECO:0000270"/>
    <property type="project" value="RGD"/>
</dbReference>
<dbReference type="GO" id="GO:0071466">
    <property type="term" value="P:cellular response to xenobiotic stimulus"/>
    <property type="evidence" value="ECO:0000266"/>
    <property type="project" value="RGD"/>
</dbReference>
<dbReference type="GO" id="GO:0019934">
    <property type="term" value="P:cGMP-mediated signaling"/>
    <property type="evidence" value="ECO:0000314"/>
    <property type="project" value="RGD"/>
</dbReference>
<dbReference type="GO" id="GO:0007623">
    <property type="term" value="P:circadian rhythm"/>
    <property type="evidence" value="ECO:0000266"/>
    <property type="project" value="RGD"/>
</dbReference>
<dbReference type="GO" id="GO:0042742">
    <property type="term" value="P:defense response to bacterium"/>
    <property type="evidence" value="ECO:0000250"/>
    <property type="project" value="UniProtKB"/>
</dbReference>
<dbReference type="GO" id="GO:0050829">
    <property type="term" value="P:defense response to Gram-negative bacterium"/>
    <property type="evidence" value="ECO:0000270"/>
    <property type="project" value="RGD"/>
</dbReference>
<dbReference type="GO" id="GO:0001935">
    <property type="term" value="P:endothelial cell proliferation"/>
    <property type="evidence" value="ECO:0000270"/>
    <property type="project" value="RGD"/>
</dbReference>
<dbReference type="GO" id="GO:0038096">
    <property type="term" value="P:Fc-gamma receptor signaling pathway involved in phagocytosis"/>
    <property type="evidence" value="ECO:0000266"/>
    <property type="project" value="RGD"/>
</dbReference>
<dbReference type="GO" id="GO:0007199">
    <property type="term" value="P:G protein-coupled receptor signaling pathway coupled to cGMP nucleotide second messenger"/>
    <property type="evidence" value="ECO:0000314"/>
    <property type="project" value="RGD"/>
</dbReference>
<dbReference type="GO" id="GO:0016137">
    <property type="term" value="P:glycoside metabolic process"/>
    <property type="evidence" value="ECO:0000270"/>
    <property type="project" value="RGD"/>
</dbReference>
<dbReference type="GO" id="GO:0006954">
    <property type="term" value="P:inflammatory response"/>
    <property type="evidence" value="ECO:0000318"/>
    <property type="project" value="GO_Central"/>
</dbReference>
<dbReference type="GO" id="GO:0035556">
    <property type="term" value="P:intracellular signal transduction"/>
    <property type="evidence" value="ECO:0000315"/>
    <property type="project" value="RGD"/>
</dbReference>
<dbReference type="GO" id="GO:0045776">
    <property type="term" value="P:negative regulation of blood pressure"/>
    <property type="evidence" value="ECO:0000318"/>
    <property type="project" value="GO_Central"/>
</dbReference>
<dbReference type="GO" id="GO:0010629">
    <property type="term" value="P:negative regulation of gene expression"/>
    <property type="evidence" value="ECO:0000266"/>
    <property type="project" value="RGD"/>
</dbReference>
<dbReference type="GO" id="GO:0042177">
    <property type="term" value="P:negative regulation of protein catabolic process"/>
    <property type="evidence" value="ECO:0000266"/>
    <property type="project" value="RGD"/>
</dbReference>
<dbReference type="GO" id="GO:0006809">
    <property type="term" value="P:nitric oxide biosynthetic process"/>
    <property type="evidence" value="ECO:0000314"/>
    <property type="project" value="RGD"/>
</dbReference>
<dbReference type="GO" id="GO:0007263">
    <property type="term" value="P:nitric oxide mediated signal transduction"/>
    <property type="evidence" value="ECO:0000318"/>
    <property type="project" value="GO_Central"/>
</dbReference>
<dbReference type="GO" id="GO:0018119">
    <property type="term" value="P:peptidyl-cysteine S-nitrosylation"/>
    <property type="evidence" value="ECO:0000250"/>
    <property type="project" value="UniProtKB"/>
</dbReference>
<dbReference type="GO" id="GO:0043065">
    <property type="term" value="P:positive regulation of apoptotic process"/>
    <property type="evidence" value="ECO:0000315"/>
    <property type="project" value="RGD"/>
</dbReference>
<dbReference type="GO" id="GO:0032755">
    <property type="term" value="P:positive regulation of interleukin-6 production"/>
    <property type="evidence" value="ECO:0000250"/>
    <property type="project" value="UniProtKB"/>
</dbReference>
<dbReference type="GO" id="GO:0032757">
    <property type="term" value="P:positive regulation of interleukin-8 production"/>
    <property type="evidence" value="ECO:0000250"/>
    <property type="project" value="UniProtKB"/>
</dbReference>
<dbReference type="GO" id="GO:0032310">
    <property type="term" value="P:prostaglandin secretion"/>
    <property type="evidence" value="ECO:0000250"/>
    <property type="project" value="UniProtKB"/>
</dbReference>
<dbReference type="GO" id="GO:0008217">
    <property type="term" value="P:regulation of blood pressure"/>
    <property type="evidence" value="ECO:0000315"/>
    <property type="project" value="RGD"/>
</dbReference>
<dbReference type="GO" id="GO:0042127">
    <property type="term" value="P:regulation of cell population proliferation"/>
    <property type="evidence" value="ECO:0000266"/>
    <property type="project" value="RGD"/>
</dbReference>
<dbReference type="GO" id="GO:1900015">
    <property type="term" value="P:regulation of cytokine production involved in inflammatory response"/>
    <property type="evidence" value="ECO:0000250"/>
    <property type="project" value="UniProtKB"/>
</dbReference>
<dbReference type="GO" id="GO:0050796">
    <property type="term" value="P:regulation of insulin secretion"/>
    <property type="evidence" value="ECO:0000266"/>
    <property type="project" value="RGD"/>
</dbReference>
<dbReference type="GO" id="GO:0014823">
    <property type="term" value="P:response to activity"/>
    <property type="evidence" value="ECO:0000270"/>
    <property type="project" value="RGD"/>
</dbReference>
<dbReference type="GO" id="GO:0009617">
    <property type="term" value="P:response to bacterium"/>
    <property type="evidence" value="ECO:0000266"/>
    <property type="project" value="RGD"/>
</dbReference>
<dbReference type="GO" id="GO:0071548">
    <property type="term" value="P:response to dexamethasone"/>
    <property type="evidence" value="ECO:0000270"/>
    <property type="project" value="RGD"/>
</dbReference>
<dbReference type="GO" id="GO:0032355">
    <property type="term" value="P:response to estradiol"/>
    <property type="evidence" value="ECO:0000270"/>
    <property type="project" value="RGD"/>
</dbReference>
<dbReference type="GO" id="GO:0009750">
    <property type="term" value="P:response to fructose"/>
    <property type="evidence" value="ECO:0000270"/>
    <property type="project" value="RGD"/>
</dbReference>
<dbReference type="GO" id="GO:0009749">
    <property type="term" value="P:response to glucose"/>
    <property type="evidence" value="ECO:0000270"/>
    <property type="project" value="RGD"/>
</dbReference>
<dbReference type="GO" id="GO:0009725">
    <property type="term" value="P:response to hormone"/>
    <property type="evidence" value="ECO:0000270"/>
    <property type="project" value="RGD"/>
</dbReference>
<dbReference type="GO" id="GO:0001666">
    <property type="term" value="P:response to hypoxia"/>
    <property type="evidence" value="ECO:0000266"/>
    <property type="project" value="RGD"/>
</dbReference>
<dbReference type="GO" id="GO:0035902">
    <property type="term" value="P:response to immobilization stress"/>
    <property type="evidence" value="ECO:0000270"/>
    <property type="project" value="RGD"/>
</dbReference>
<dbReference type="GO" id="GO:0032496">
    <property type="term" value="P:response to lipopolysaccharide"/>
    <property type="evidence" value="ECO:0000270"/>
    <property type="project" value="RGD"/>
</dbReference>
<dbReference type="GO" id="GO:0009612">
    <property type="term" value="P:response to mechanical stimulus"/>
    <property type="evidence" value="ECO:0000270"/>
    <property type="project" value="RGD"/>
</dbReference>
<dbReference type="GO" id="GO:0090649">
    <property type="term" value="P:response to oxygen-glucose deprivation"/>
    <property type="evidence" value="ECO:0000270"/>
    <property type="project" value="RGD"/>
</dbReference>
<dbReference type="GO" id="GO:0034612">
    <property type="term" value="P:response to tumor necrosis factor"/>
    <property type="evidence" value="ECO:0000315"/>
    <property type="project" value="RGD"/>
</dbReference>
<dbReference type="GO" id="GO:0048384">
    <property type="term" value="P:retinoic acid receptor signaling pathway"/>
    <property type="evidence" value="ECO:0000270"/>
    <property type="project" value="RGD"/>
</dbReference>
<dbReference type="GO" id="GO:0006801">
    <property type="term" value="P:superoxide metabolic process"/>
    <property type="evidence" value="ECO:0000250"/>
    <property type="project" value="UniProtKB"/>
</dbReference>
<dbReference type="CDD" id="cd00795">
    <property type="entry name" value="NOS_oxygenase_euk"/>
    <property type="match status" value="1"/>
</dbReference>
<dbReference type="FunFam" id="1.20.990.10:FF:000006">
    <property type="entry name" value="Nitric oxide synthase"/>
    <property type="match status" value="1"/>
</dbReference>
<dbReference type="FunFam" id="3.40.50.360:FF:000039">
    <property type="entry name" value="Nitric oxide synthase"/>
    <property type="match status" value="1"/>
</dbReference>
<dbReference type="FunFam" id="3.40.50.80:FF:000003">
    <property type="entry name" value="Nitric oxide synthase"/>
    <property type="match status" value="1"/>
</dbReference>
<dbReference type="FunFam" id="3.90.1230.10:FF:000001">
    <property type="entry name" value="Nitric oxide synthase, brain"/>
    <property type="match status" value="1"/>
</dbReference>
<dbReference type="FunFam" id="3.90.440.10:FF:000005">
    <property type="entry name" value="Nitric oxide synthase, inducible"/>
    <property type="match status" value="1"/>
</dbReference>
<dbReference type="Gene3D" id="3.40.50.360">
    <property type="match status" value="2"/>
</dbReference>
<dbReference type="Gene3D" id="6.10.250.410">
    <property type="match status" value="1"/>
</dbReference>
<dbReference type="Gene3D" id="1.20.990.10">
    <property type="entry name" value="NADPH-cytochrome p450 Reductase, Chain A, domain 3"/>
    <property type="match status" value="1"/>
</dbReference>
<dbReference type="Gene3D" id="3.90.340.10">
    <property type="entry name" value="Nitric Oxide Synthase, Chain A, domain 1"/>
    <property type="match status" value="1"/>
</dbReference>
<dbReference type="Gene3D" id="3.90.1230.10">
    <property type="entry name" value="Nitric Oxide Synthase, Chain A, domain 3"/>
    <property type="match status" value="1"/>
</dbReference>
<dbReference type="Gene3D" id="3.90.440.10">
    <property type="entry name" value="Nitric Oxide Synthase,Heme Domain,Chain A domain 2"/>
    <property type="match status" value="1"/>
</dbReference>
<dbReference type="Gene3D" id="3.40.50.80">
    <property type="entry name" value="Nucleotide-binding domain of ferredoxin-NADP reductase (FNR) module"/>
    <property type="match status" value="1"/>
</dbReference>
<dbReference type="Gene3D" id="2.40.30.10">
    <property type="entry name" value="Translation factors"/>
    <property type="match status" value="1"/>
</dbReference>
<dbReference type="InterPro" id="IPR003097">
    <property type="entry name" value="CysJ-like_FAD-binding"/>
</dbReference>
<dbReference type="InterPro" id="IPR017927">
    <property type="entry name" value="FAD-bd_FR_type"/>
</dbReference>
<dbReference type="InterPro" id="IPR001094">
    <property type="entry name" value="Flavdoxin-like"/>
</dbReference>
<dbReference type="InterPro" id="IPR008254">
    <property type="entry name" value="Flavodoxin/NO_synth"/>
</dbReference>
<dbReference type="InterPro" id="IPR001709">
    <property type="entry name" value="Flavoprot_Pyr_Nucl_cyt_Rdtase"/>
</dbReference>
<dbReference type="InterPro" id="IPR029039">
    <property type="entry name" value="Flavoprotein-like_sf"/>
</dbReference>
<dbReference type="InterPro" id="IPR039261">
    <property type="entry name" value="FNR_nucleotide-bd"/>
</dbReference>
<dbReference type="InterPro" id="IPR023173">
    <property type="entry name" value="NADPH_Cyt_P450_Rdtase_alpha"/>
</dbReference>
<dbReference type="InterPro" id="IPR050607">
    <property type="entry name" value="NOS"/>
</dbReference>
<dbReference type="InterPro" id="IPR044943">
    <property type="entry name" value="NOS_dom_1"/>
</dbReference>
<dbReference type="InterPro" id="IPR044940">
    <property type="entry name" value="NOS_dom_2"/>
</dbReference>
<dbReference type="InterPro" id="IPR044944">
    <property type="entry name" value="NOS_dom_3"/>
</dbReference>
<dbReference type="InterPro" id="IPR012144">
    <property type="entry name" value="NOS_euk"/>
</dbReference>
<dbReference type="InterPro" id="IPR004030">
    <property type="entry name" value="NOS_N"/>
</dbReference>
<dbReference type="InterPro" id="IPR036119">
    <property type="entry name" value="NOS_N_sf"/>
</dbReference>
<dbReference type="InterPro" id="IPR001433">
    <property type="entry name" value="OxRdtase_FAD/NAD-bd"/>
</dbReference>
<dbReference type="InterPro" id="IPR017938">
    <property type="entry name" value="Riboflavin_synthase-like_b-brl"/>
</dbReference>
<dbReference type="PANTHER" id="PTHR43410:SF4">
    <property type="entry name" value="NITRIC OXIDE SYNTHASE"/>
    <property type="match status" value="1"/>
</dbReference>
<dbReference type="PANTHER" id="PTHR43410">
    <property type="entry name" value="NITRIC OXIDE SYNTHASE OXYGENASE"/>
    <property type="match status" value="1"/>
</dbReference>
<dbReference type="Pfam" id="PF00667">
    <property type="entry name" value="FAD_binding_1"/>
    <property type="match status" value="1"/>
</dbReference>
<dbReference type="Pfam" id="PF00258">
    <property type="entry name" value="Flavodoxin_1"/>
    <property type="match status" value="1"/>
</dbReference>
<dbReference type="Pfam" id="PF00175">
    <property type="entry name" value="NAD_binding_1"/>
    <property type="match status" value="1"/>
</dbReference>
<dbReference type="Pfam" id="PF02898">
    <property type="entry name" value="NO_synthase"/>
    <property type="match status" value="1"/>
</dbReference>
<dbReference type="PIRSF" id="PIRSF000333">
    <property type="entry name" value="NOS"/>
    <property type="match status" value="1"/>
</dbReference>
<dbReference type="PRINTS" id="PR00369">
    <property type="entry name" value="FLAVODOXIN"/>
</dbReference>
<dbReference type="PRINTS" id="PR00371">
    <property type="entry name" value="FPNCR"/>
</dbReference>
<dbReference type="SUPFAM" id="SSF52343">
    <property type="entry name" value="Ferredoxin reductase-like, C-terminal NADP-linked domain"/>
    <property type="match status" value="1"/>
</dbReference>
<dbReference type="SUPFAM" id="SSF52218">
    <property type="entry name" value="Flavoproteins"/>
    <property type="match status" value="1"/>
</dbReference>
<dbReference type="SUPFAM" id="SSF56512">
    <property type="entry name" value="Nitric oxide (NO) synthase oxygenase domain"/>
    <property type="match status" value="1"/>
</dbReference>
<dbReference type="SUPFAM" id="SSF63380">
    <property type="entry name" value="Riboflavin synthase domain-like"/>
    <property type="match status" value="1"/>
</dbReference>
<dbReference type="PROSITE" id="PS51384">
    <property type="entry name" value="FAD_FR"/>
    <property type="match status" value="1"/>
</dbReference>
<dbReference type="PROSITE" id="PS50902">
    <property type="entry name" value="FLAVODOXIN_LIKE"/>
    <property type="match status" value="1"/>
</dbReference>
<dbReference type="PROSITE" id="PS60001">
    <property type="entry name" value="NOS"/>
    <property type="match status" value="1"/>
</dbReference>
<reference key="1">
    <citation type="journal article" date="1993" name="Biochem. Biophys. Res. Commun.">
        <title>Cloning of inducible nitric oxide synthase in rat vascular smooth muscle cells.</title>
        <authorList>
            <person name="Nunokawa Y."/>
            <person name="Ishida N."/>
            <person name="Tanaka S."/>
        </authorList>
    </citation>
    <scope>NUCLEOTIDE SEQUENCE [MRNA]</scope>
    <source>
        <tissue>Vascular smooth muscle</tissue>
    </source>
</reference>
<reference key="2">
    <citation type="journal article" date="1995" name="Diabetes">
        <title>Cloning and expression of cytokine-inducible nitric oxide synthase cDNA from rat islets of Langerhans.</title>
        <authorList>
            <person name="Karlsen A.E."/>
            <person name="Andersen H.U."/>
            <person name="Vissing H."/>
            <person name="Larsen P.M."/>
            <person name="Fey S.J."/>
            <person name="Cuartero B.G."/>
            <person name="Madsen O.D."/>
            <person name="Petersen J.S."/>
            <person name="Mortensen S.B."/>
            <person name="Mandrup-Poulsen T."/>
            <person name="Boel E."/>
            <person name="Nerup J."/>
        </authorList>
    </citation>
    <scope>NUCLEOTIDE SEQUENCE [MRNA]</scope>
    <source>
        <strain>Wistar</strain>
        <tissue>Pancreatic islet</tissue>
    </source>
</reference>
<reference key="3">
    <citation type="journal article" date="1994" name="J. Neurosci. Res.">
        <title>Cloning and expression of inducible nitric oxide synthase from rat astrocytes.</title>
        <authorList>
            <person name="Galea E."/>
            <person name="Reis D.J."/>
            <person name="Feinstein D.L."/>
        </authorList>
    </citation>
    <scope>NUCLEOTIDE SEQUENCE [MRNA]</scope>
    <source>
        <strain>Sprague-Dawley</strain>
        <tissue>Astrocyte</tissue>
    </source>
</reference>
<reference key="4">
    <citation type="journal article" date="1993" name="Eur. J. Biochem.">
        <title>Molecular cloning of a cDNA encoding an inducible calmodulin-dependent nitric-oxide synthase from rat liver and its expression in COS 1 cells.</title>
        <authorList>
            <person name="Adachi H."/>
            <person name="Iida S."/>
            <person name="Oguchi S."/>
            <person name="Ohshima H."/>
            <person name="Suzuki H."/>
            <person name="Nagasaki K."/>
            <person name="Kawasaki H."/>
            <person name="Sugimura T."/>
            <person name="Esumi H."/>
        </authorList>
    </citation>
    <scope>NUCLEOTIDE SEQUENCE [MRNA]</scope>
    <scope>PARTIAL PROTEIN SEQUENCE</scope>
    <source>
        <tissue>Liver</tissue>
    </source>
</reference>
<reference key="5">
    <citation type="journal article" date="1993" name="Biochem. Biophys. Res. Commun.">
        <title>Hepatocytes and macrophages express an identical cytokine inducible nitric oxide synthase gene.</title>
        <authorList>
            <person name="Wood E.R."/>
            <person name="Berger H. Jr."/>
            <person name="Sherman P.A."/>
            <person name="Lapetina E.G."/>
        </authorList>
    </citation>
    <scope>NUCLEOTIDE SEQUENCE [MRNA]</scope>
    <source>
        <strain>Sprague-Dawley</strain>
        <tissue>Hepatocyte</tissue>
    </source>
</reference>
<reference key="6">
    <citation type="journal article" date="1994" name="Biochim. Biophys. Acta">
        <title>cDNA cloning and expression of inducible nitric oxide synthase from rat vascular smooth muscle cells.</title>
        <authorList>
            <person name="Geng Y.J."/>
            <person name="Almquist M."/>
            <person name="Hansson G.K."/>
        </authorList>
    </citation>
    <scope>NUCLEOTIDE SEQUENCE [MRNA]</scope>
    <source>
        <strain>Sprague-Dawley</strain>
        <tissue>Aorta</tissue>
    </source>
</reference>
<reference key="7">
    <citation type="journal article" date="1994" name="Endothelium">
        <title>Cloning of an inducible nitric oxide synthase from rat polymorphonuclear neutrophils.</title>
        <authorList>
            <person name="Kosuga K."/>
            <person name="Yui Y."/>
            <person name="Hattori R."/>
            <person name="Sase K."/>
            <person name="Eizawa H."/>
            <person name="Aoyama T."/>
            <person name="Inoue R."/>
            <person name="Sasayama S."/>
        </authorList>
    </citation>
    <scope>NUCLEOTIDE SEQUENCE [MRNA]</scope>
</reference>
<reference key="8">
    <citation type="journal article" date="1996" name="Biol. Pharm. Bull.">
        <title>Sequence analysis of inducible nitric oxide synthase in rat kidney, lung, and uterus.</title>
        <authorList>
            <person name="Tsutsumishita Y."/>
            <person name="Kawai Y."/>
            <person name="Takahara H."/>
            <person name="Onda T."/>
            <person name="Miyoshi J."/>
            <person name="Futaki S."/>
            <person name="Niwa M."/>
        </authorList>
    </citation>
    <scope>NUCLEOTIDE SEQUENCE [MRNA]</scope>
</reference>
<reference key="9">
    <citation type="journal article" date="1998" name="Nitric Oxide">
        <title>Complete coding sequence of inducible nitric oxide synthase from human heart and skeletal muscle of patients with chronic heart failure.</title>
        <authorList>
            <person name="Adams V."/>
            <person name="Krabbes S."/>
            <person name="Jiang H."/>
            <person name="Yu J."/>
            <person name="Rahmel A."/>
            <person name="Gielen S."/>
            <person name="Schuler G."/>
            <person name="Hambrecht R."/>
        </authorList>
    </citation>
    <scope>NUCLEOTIDE SEQUENCE [MRNA]</scope>
</reference>
<reference key="10">
    <citation type="journal article" date="1998" name="Hypertension">
        <title>Vascular smooth muscle nitric oxide synthase anomalies in Dahl/Rapp salt-sensitive rats.</title>
        <authorList>
            <person name="Chen P.Y."/>
            <person name="Gladish R.D."/>
            <person name="Sanders P.W."/>
        </authorList>
    </citation>
    <scope>NUCLEOTIDE SEQUENCE [MRNA] OF 426-788</scope>
    <source>
        <strain>Dahl/Rapp salt sensitive strain</strain>
        <tissue>Vascular smooth muscle</tissue>
    </source>
</reference>
<reference key="11">
    <citation type="journal article" date="1996" name="Nefrologia">
        <title>Advances in the studies of NO synthesis regulation in mesanglial cells.</title>
        <authorList>
            <person name="Saura M."/>
            <person name="Zaragoza C."/>
            <person name="Martinez-Dalmau R."/>
            <person name="Perez-Sala D."/>
            <person name="Lamas S."/>
        </authorList>
    </citation>
    <scope>NUCLEOTIDE SEQUENCE [MRNA] OF 509-740</scope>
    <source>
        <strain>Wistar</strain>
        <tissue>Renal glomerulus</tissue>
    </source>
</reference>
<reference key="12">
    <citation type="journal article" date="1994" name="Kidney Int.">
        <title>Location of an inducible nitric oxide synthase mRNA in the normal kidney.</title>
        <authorList>
            <person name="Morrissey J.J."/>
            <person name="McCracken R."/>
            <person name="Kaneto H."/>
            <person name="Vehaskari M."/>
            <person name="Montani D."/>
            <person name="Klahr S."/>
        </authorList>
    </citation>
    <scope>NUCLEOTIDE SEQUENCE [MRNA] OF 479-655</scope>
    <source>
        <strain>Sprague-Dawley</strain>
        <tissue>Renal glomerulus</tissue>
    </source>
</reference>
<reference key="13">
    <citation type="submission" date="1994-09" db="EMBL/GenBank/DDBJ databases">
        <title>Isolation and characterization of iNOS from rat cardiocytes.</title>
        <authorList>
            <person name="Michel T."/>
            <person name="Balligand J.-L."/>
        </authorList>
    </citation>
    <scope>NUCLEOTIDE SEQUENCE [MRNA] OF 420-479</scope>
    <source>
        <tissue>Myocardium</tissue>
    </source>
</reference>
<reference key="14">
    <citation type="journal article" date="2006" name="Proc. Natl. Acad. Sci. U.S.A.">
        <title>Quantitative phosphoproteomics of vasopressin-sensitive renal cells: regulation of aquaporin-2 phosphorylation at two sites.</title>
        <authorList>
            <person name="Hoffert J.D."/>
            <person name="Pisitkun T."/>
            <person name="Wang G."/>
            <person name="Shen R.-F."/>
            <person name="Knepper M.A."/>
        </authorList>
    </citation>
    <scope>PHOSPHORYLATION [LARGE SCALE ANALYSIS] AT THR-564 AND TYR-572</scope>
    <scope>IDENTIFICATION BY MASS SPECTROMETRY [LARGE SCALE ANALYSIS]</scope>
</reference>
<evidence type="ECO:0000250" key="1"/>
<evidence type="ECO:0000250" key="2">
    <source>
        <dbReference type="UniProtKB" id="P29474"/>
    </source>
</evidence>
<evidence type="ECO:0000250" key="3">
    <source>
        <dbReference type="UniProtKB" id="P29476"/>
    </source>
</evidence>
<evidence type="ECO:0000250" key="4">
    <source>
        <dbReference type="UniProtKB" id="P29477"/>
    </source>
</evidence>
<evidence type="ECO:0000250" key="5">
    <source>
        <dbReference type="UniProtKB" id="P35228"/>
    </source>
</evidence>
<evidence type="ECO:0000255" key="6">
    <source>
        <dbReference type="PROSITE-ProRule" id="PRU00088"/>
    </source>
</evidence>
<evidence type="ECO:0000255" key="7">
    <source>
        <dbReference type="PROSITE-ProRule" id="PRU00716"/>
    </source>
</evidence>
<evidence type="ECO:0000256" key="8">
    <source>
        <dbReference type="SAM" id="MobiDB-lite"/>
    </source>
</evidence>
<evidence type="ECO:0000305" key="9"/>
<evidence type="ECO:0000305" key="10">
    <source>
    </source>
</evidence>
<evidence type="ECO:0007744" key="11">
    <source>
    </source>
</evidence>
<organism>
    <name type="scientific">Rattus norvegicus</name>
    <name type="common">Rat</name>
    <dbReference type="NCBI Taxonomy" id="10116"/>
    <lineage>
        <taxon>Eukaryota</taxon>
        <taxon>Metazoa</taxon>
        <taxon>Chordata</taxon>
        <taxon>Craniata</taxon>
        <taxon>Vertebrata</taxon>
        <taxon>Euteleostomi</taxon>
        <taxon>Mammalia</taxon>
        <taxon>Eutheria</taxon>
        <taxon>Euarchontoglires</taxon>
        <taxon>Glires</taxon>
        <taxon>Rodentia</taxon>
        <taxon>Myomorpha</taxon>
        <taxon>Muroidea</taxon>
        <taxon>Muridae</taxon>
        <taxon>Murinae</taxon>
        <taxon>Rattus</taxon>
    </lineage>
</organism>
<protein>
    <recommendedName>
        <fullName>Nitric oxide synthase, inducible</fullName>
        <ecNumber evidence="5">1.14.13.39</ecNumber>
    </recommendedName>
    <alternativeName>
        <fullName>Inducible NO synthase</fullName>
        <shortName>Inducible NOS</shortName>
        <shortName>iNOS</shortName>
    </alternativeName>
    <alternativeName>
        <fullName>NOS type II</fullName>
    </alternativeName>
    <alternativeName>
        <fullName>Peptidyl-cysteine S-nitrosylase NOS2</fullName>
    </alternativeName>
</protein>